<reference key="1">
    <citation type="journal article" date="2004" name="Nat. Biotechnol.">
        <title>The genome sequence of the extreme thermophile Thermus thermophilus.</title>
        <authorList>
            <person name="Henne A."/>
            <person name="Brueggemann H."/>
            <person name="Raasch C."/>
            <person name="Wiezer A."/>
            <person name="Hartsch T."/>
            <person name="Liesegang H."/>
            <person name="Johann A."/>
            <person name="Lienard T."/>
            <person name="Gohl O."/>
            <person name="Martinez-Arias R."/>
            <person name="Jacobi C."/>
            <person name="Starkuviene V."/>
            <person name="Schlenczeck S."/>
            <person name="Dencker S."/>
            <person name="Huber R."/>
            <person name="Klenk H.-P."/>
            <person name="Kramer W."/>
            <person name="Merkl R."/>
            <person name="Gottschalk G."/>
            <person name="Fritz H.-J."/>
        </authorList>
    </citation>
    <scope>NUCLEOTIDE SEQUENCE [LARGE SCALE GENOMIC DNA]</scope>
    <source>
        <strain>ATCC BAA-163 / DSM 7039 / HB27</strain>
    </source>
</reference>
<dbReference type="EC" id="1.2.1.70" evidence="1"/>
<dbReference type="EMBL" id="AE017221">
    <property type="protein sequence ID" value="AAS81484.1"/>
    <property type="molecule type" value="Genomic_DNA"/>
</dbReference>
<dbReference type="RefSeq" id="WP_011173555.1">
    <property type="nucleotide sequence ID" value="NC_005835.1"/>
</dbReference>
<dbReference type="SMR" id="Q72IJ0"/>
<dbReference type="KEGG" id="tth:TT_C1142"/>
<dbReference type="eggNOG" id="COG0373">
    <property type="taxonomic scope" value="Bacteria"/>
</dbReference>
<dbReference type="HOGENOM" id="CLU_035113_2_2_0"/>
<dbReference type="OrthoDB" id="110209at2"/>
<dbReference type="UniPathway" id="UPA00251">
    <property type="reaction ID" value="UER00316"/>
</dbReference>
<dbReference type="Proteomes" id="UP000000592">
    <property type="component" value="Chromosome"/>
</dbReference>
<dbReference type="GO" id="GO:0008883">
    <property type="term" value="F:glutamyl-tRNA reductase activity"/>
    <property type="evidence" value="ECO:0007669"/>
    <property type="project" value="UniProtKB-UniRule"/>
</dbReference>
<dbReference type="GO" id="GO:0050661">
    <property type="term" value="F:NADP binding"/>
    <property type="evidence" value="ECO:0007669"/>
    <property type="project" value="InterPro"/>
</dbReference>
<dbReference type="GO" id="GO:0019353">
    <property type="term" value="P:protoporphyrinogen IX biosynthetic process from glutamate"/>
    <property type="evidence" value="ECO:0007669"/>
    <property type="project" value="TreeGrafter"/>
</dbReference>
<dbReference type="CDD" id="cd05213">
    <property type="entry name" value="NAD_bind_Glutamyl_tRNA_reduct"/>
    <property type="match status" value="1"/>
</dbReference>
<dbReference type="FunFam" id="3.30.460.30:FF:000001">
    <property type="entry name" value="Glutamyl-tRNA reductase"/>
    <property type="match status" value="1"/>
</dbReference>
<dbReference type="FunFam" id="3.40.50.720:FF:000031">
    <property type="entry name" value="Glutamyl-tRNA reductase"/>
    <property type="match status" value="1"/>
</dbReference>
<dbReference type="Gene3D" id="3.30.460.30">
    <property type="entry name" value="Glutamyl-tRNA reductase, N-terminal domain"/>
    <property type="match status" value="1"/>
</dbReference>
<dbReference type="Gene3D" id="3.40.50.720">
    <property type="entry name" value="NAD(P)-binding Rossmann-like Domain"/>
    <property type="match status" value="1"/>
</dbReference>
<dbReference type="HAMAP" id="MF_00087">
    <property type="entry name" value="Glu_tRNA_reductase"/>
    <property type="match status" value="1"/>
</dbReference>
<dbReference type="InterPro" id="IPR000343">
    <property type="entry name" value="4pyrrol_synth_GluRdtase"/>
</dbReference>
<dbReference type="InterPro" id="IPR015895">
    <property type="entry name" value="4pyrrol_synth_GluRdtase_N"/>
</dbReference>
<dbReference type="InterPro" id="IPR018214">
    <property type="entry name" value="GluRdtase_CS"/>
</dbReference>
<dbReference type="InterPro" id="IPR036343">
    <property type="entry name" value="GluRdtase_N_sf"/>
</dbReference>
<dbReference type="InterPro" id="IPR036291">
    <property type="entry name" value="NAD(P)-bd_dom_sf"/>
</dbReference>
<dbReference type="InterPro" id="IPR006151">
    <property type="entry name" value="Shikm_DH/Glu-tRNA_Rdtase"/>
</dbReference>
<dbReference type="NCBIfam" id="TIGR01035">
    <property type="entry name" value="hemA"/>
    <property type="match status" value="1"/>
</dbReference>
<dbReference type="PANTHER" id="PTHR43013">
    <property type="entry name" value="GLUTAMYL-TRNA REDUCTASE"/>
    <property type="match status" value="1"/>
</dbReference>
<dbReference type="PANTHER" id="PTHR43013:SF1">
    <property type="entry name" value="GLUTAMYL-TRNA REDUCTASE"/>
    <property type="match status" value="1"/>
</dbReference>
<dbReference type="Pfam" id="PF05201">
    <property type="entry name" value="GlutR_N"/>
    <property type="match status" value="1"/>
</dbReference>
<dbReference type="Pfam" id="PF01488">
    <property type="entry name" value="Shikimate_DH"/>
    <property type="match status" value="1"/>
</dbReference>
<dbReference type="PIRSF" id="PIRSF000445">
    <property type="entry name" value="4pyrrol_synth_GluRdtase"/>
    <property type="match status" value="1"/>
</dbReference>
<dbReference type="SUPFAM" id="SSF69742">
    <property type="entry name" value="Glutamyl tRNA-reductase catalytic, N-terminal domain"/>
    <property type="match status" value="1"/>
</dbReference>
<dbReference type="SUPFAM" id="SSF51735">
    <property type="entry name" value="NAD(P)-binding Rossmann-fold domains"/>
    <property type="match status" value="1"/>
</dbReference>
<dbReference type="PROSITE" id="PS00747">
    <property type="entry name" value="GLUTR"/>
    <property type="match status" value="1"/>
</dbReference>
<protein>
    <recommendedName>
        <fullName evidence="1">Glutamyl-tRNA reductase</fullName>
        <shortName evidence="1">GluTR</shortName>
        <ecNumber evidence="1">1.2.1.70</ecNumber>
    </recommendedName>
</protein>
<evidence type="ECO:0000255" key="1">
    <source>
        <dbReference type="HAMAP-Rule" id="MF_00087"/>
    </source>
</evidence>
<gene>
    <name evidence="1" type="primary">hemA</name>
    <name type="ordered locus">TT_C1142</name>
</gene>
<comment type="function">
    <text evidence="1">Catalyzes the NADPH-dependent reduction of glutamyl-tRNA(Glu) to glutamate 1-semialdehyde (GSA).</text>
</comment>
<comment type="catalytic activity">
    <reaction evidence="1">
        <text>(S)-4-amino-5-oxopentanoate + tRNA(Glu) + NADP(+) = L-glutamyl-tRNA(Glu) + NADPH + H(+)</text>
        <dbReference type="Rhea" id="RHEA:12344"/>
        <dbReference type="Rhea" id="RHEA-COMP:9663"/>
        <dbReference type="Rhea" id="RHEA-COMP:9680"/>
        <dbReference type="ChEBI" id="CHEBI:15378"/>
        <dbReference type="ChEBI" id="CHEBI:57501"/>
        <dbReference type="ChEBI" id="CHEBI:57783"/>
        <dbReference type="ChEBI" id="CHEBI:58349"/>
        <dbReference type="ChEBI" id="CHEBI:78442"/>
        <dbReference type="ChEBI" id="CHEBI:78520"/>
        <dbReference type="EC" id="1.2.1.70"/>
    </reaction>
</comment>
<comment type="pathway">
    <text evidence="1">Porphyrin-containing compound metabolism; protoporphyrin-IX biosynthesis; 5-aminolevulinate from L-glutamyl-tRNA(Glu): step 1/2.</text>
</comment>
<comment type="subunit">
    <text evidence="1">Homodimer.</text>
</comment>
<comment type="domain">
    <text evidence="1">Possesses an unusual extended V-shaped dimeric structure with each monomer consisting of three distinct domains arranged along a curved 'spinal' alpha-helix. The N-terminal catalytic domain specifically recognizes the glutamate moiety of the substrate. The second domain is the NADPH-binding domain, and the third C-terminal domain is responsible for dimerization.</text>
</comment>
<comment type="miscellaneous">
    <text evidence="1">During catalysis, the active site Cys acts as a nucleophile attacking the alpha-carbonyl group of tRNA-bound glutamate with the formation of a thioester intermediate between enzyme and glutamate, and the concomitant release of tRNA(Glu). The thioester intermediate is finally reduced by direct hydride transfer from NADPH, to form the product GSA.</text>
</comment>
<comment type="similarity">
    <text evidence="1">Belongs to the glutamyl-tRNA reductase family.</text>
</comment>
<name>HEM1_THET2</name>
<organism>
    <name type="scientific">Thermus thermophilus (strain ATCC BAA-163 / DSM 7039 / HB27)</name>
    <dbReference type="NCBI Taxonomy" id="262724"/>
    <lineage>
        <taxon>Bacteria</taxon>
        <taxon>Thermotogati</taxon>
        <taxon>Deinococcota</taxon>
        <taxon>Deinococci</taxon>
        <taxon>Thermales</taxon>
        <taxon>Thermaceae</taxon>
        <taxon>Thermus</taxon>
    </lineage>
</organism>
<sequence length="390" mass="41965">MALPLYLVGLSHKTAPLEVRERAALDPVVALPAALSALGKGVVLSTCNRTELYGVGSPEKARAFLLSRGVVPRHLYVKEGVEALRHLYRVAAGLDSLVVGEAQILGQVREALFLARRQGATESLLEKAFQSAIALGKRARSETGIGMGAVSVAYAALDLALAVYGDLSGLSVAVLGAGEMAELFLTHLKAHGVGRILVVNRTEEKAQALAERFGGEAFGLPALPQVLRQADLVVASAAAPHYLVGPEDLPKRAKPLFLIDIALPRNIDPRVGDLPHAYLYNLDDLKRVVDRNLRARAGEIPKVEALIEKALGDYMEWYAGHRVREAIRALEAWARVQAAKAQPEAGPVELEKAAGRLAHPFILGLKRRALDRVGGPPCPEDCLLYRLSRT</sequence>
<keyword id="KW-0521">NADP</keyword>
<keyword id="KW-0560">Oxidoreductase</keyword>
<keyword id="KW-0627">Porphyrin biosynthesis</keyword>
<proteinExistence type="inferred from homology"/>
<feature type="chain" id="PRO_0000114080" description="Glutamyl-tRNA reductase">
    <location>
        <begin position="1"/>
        <end position="390"/>
    </location>
</feature>
<feature type="active site" description="Nucleophile" evidence="1">
    <location>
        <position position="47"/>
    </location>
</feature>
<feature type="binding site" evidence="1">
    <location>
        <begin position="46"/>
        <end position="49"/>
    </location>
    <ligand>
        <name>substrate</name>
    </ligand>
</feature>
<feature type="binding site" evidence="1">
    <location>
        <position position="96"/>
    </location>
    <ligand>
        <name>substrate</name>
    </ligand>
</feature>
<feature type="binding site" evidence="1">
    <location>
        <begin position="101"/>
        <end position="103"/>
    </location>
    <ligand>
        <name>substrate</name>
    </ligand>
</feature>
<feature type="binding site" evidence="1">
    <location>
        <position position="107"/>
    </location>
    <ligand>
        <name>substrate</name>
    </ligand>
</feature>
<feature type="binding site" evidence="1">
    <location>
        <begin position="176"/>
        <end position="181"/>
    </location>
    <ligand>
        <name>NADP(+)</name>
        <dbReference type="ChEBI" id="CHEBI:58349"/>
    </ligand>
</feature>
<feature type="site" description="Important for activity" evidence="1">
    <location>
        <position position="86"/>
    </location>
</feature>
<accession>Q72IJ0</accession>